<evidence type="ECO:0000255" key="1">
    <source>
        <dbReference type="HAMAP-Rule" id="MF_00050"/>
    </source>
</evidence>
<name>EFTS_TRIL1</name>
<keyword id="KW-0963">Cytoplasm</keyword>
<keyword id="KW-0251">Elongation factor</keyword>
<keyword id="KW-0648">Protein biosynthesis</keyword>
<keyword id="KW-1185">Reference proteome</keyword>
<proteinExistence type="inferred from homology"/>
<dbReference type="EMBL" id="CP001089">
    <property type="protein sequence ID" value="ACD96422.1"/>
    <property type="molecule type" value="Genomic_DNA"/>
</dbReference>
<dbReference type="RefSeq" id="WP_012470751.1">
    <property type="nucleotide sequence ID" value="NC_010814.1"/>
</dbReference>
<dbReference type="SMR" id="B3E717"/>
<dbReference type="STRING" id="398767.Glov_2709"/>
<dbReference type="KEGG" id="glo:Glov_2709"/>
<dbReference type="eggNOG" id="COG0264">
    <property type="taxonomic scope" value="Bacteria"/>
</dbReference>
<dbReference type="HOGENOM" id="CLU_047155_0_0_7"/>
<dbReference type="OrthoDB" id="9808348at2"/>
<dbReference type="Proteomes" id="UP000002420">
    <property type="component" value="Chromosome"/>
</dbReference>
<dbReference type="GO" id="GO:0005737">
    <property type="term" value="C:cytoplasm"/>
    <property type="evidence" value="ECO:0007669"/>
    <property type="project" value="UniProtKB-SubCell"/>
</dbReference>
<dbReference type="GO" id="GO:0003746">
    <property type="term" value="F:translation elongation factor activity"/>
    <property type="evidence" value="ECO:0007669"/>
    <property type="project" value="UniProtKB-UniRule"/>
</dbReference>
<dbReference type="CDD" id="cd14275">
    <property type="entry name" value="UBA_EF-Ts"/>
    <property type="match status" value="1"/>
</dbReference>
<dbReference type="FunFam" id="1.10.286.20:FF:000001">
    <property type="entry name" value="Elongation factor Ts"/>
    <property type="match status" value="1"/>
</dbReference>
<dbReference type="FunFam" id="1.10.8.10:FF:000001">
    <property type="entry name" value="Elongation factor Ts"/>
    <property type="match status" value="1"/>
</dbReference>
<dbReference type="Gene3D" id="1.10.286.20">
    <property type="match status" value="1"/>
</dbReference>
<dbReference type="Gene3D" id="1.10.8.10">
    <property type="entry name" value="DNA helicase RuvA subunit, C-terminal domain"/>
    <property type="match status" value="1"/>
</dbReference>
<dbReference type="Gene3D" id="3.30.479.20">
    <property type="entry name" value="Elongation factor Ts, dimerisation domain"/>
    <property type="match status" value="2"/>
</dbReference>
<dbReference type="HAMAP" id="MF_00050">
    <property type="entry name" value="EF_Ts"/>
    <property type="match status" value="1"/>
</dbReference>
<dbReference type="InterPro" id="IPR036402">
    <property type="entry name" value="EF-Ts_dimer_sf"/>
</dbReference>
<dbReference type="InterPro" id="IPR001816">
    <property type="entry name" value="Transl_elong_EFTs/EF1B"/>
</dbReference>
<dbReference type="InterPro" id="IPR014039">
    <property type="entry name" value="Transl_elong_EFTs/EF1B_dimer"/>
</dbReference>
<dbReference type="InterPro" id="IPR018101">
    <property type="entry name" value="Transl_elong_Ts_CS"/>
</dbReference>
<dbReference type="InterPro" id="IPR009060">
    <property type="entry name" value="UBA-like_sf"/>
</dbReference>
<dbReference type="NCBIfam" id="TIGR00116">
    <property type="entry name" value="tsf"/>
    <property type="match status" value="1"/>
</dbReference>
<dbReference type="PANTHER" id="PTHR11741">
    <property type="entry name" value="ELONGATION FACTOR TS"/>
    <property type="match status" value="1"/>
</dbReference>
<dbReference type="PANTHER" id="PTHR11741:SF0">
    <property type="entry name" value="ELONGATION FACTOR TS, MITOCHONDRIAL"/>
    <property type="match status" value="1"/>
</dbReference>
<dbReference type="Pfam" id="PF00889">
    <property type="entry name" value="EF_TS"/>
    <property type="match status" value="1"/>
</dbReference>
<dbReference type="SUPFAM" id="SSF54713">
    <property type="entry name" value="Elongation factor Ts (EF-Ts), dimerisation domain"/>
    <property type="match status" value="2"/>
</dbReference>
<dbReference type="SUPFAM" id="SSF46934">
    <property type="entry name" value="UBA-like"/>
    <property type="match status" value="1"/>
</dbReference>
<dbReference type="PROSITE" id="PS01126">
    <property type="entry name" value="EF_TS_1"/>
    <property type="match status" value="1"/>
</dbReference>
<dbReference type="PROSITE" id="PS01127">
    <property type="entry name" value="EF_TS_2"/>
    <property type="match status" value="1"/>
</dbReference>
<accession>B3E717</accession>
<reference key="1">
    <citation type="submission" date="2008-05" db="EMBL/GenBank/DDBJ databases">
        <title>Complete sequence of chromosome of Geobacter lovleyi SZ.</title>
        <authorList>
            <consortium name="US DOE Joint Genome Institute"/>
            <person name="Lucas S."/>
            <person name="Copeland A."/>
            <person name="Lapidus A."/>
            <person name="Glavina del Rio T."/>
            <person name="Dalin E."/>
            <person name="Tice H."/>
            <person name="Bruce D."/>
            <person name="Goodwin L."/>
            <person name="Pitluck S."/>
            <person name="Chertkov O."/>
            <person name="Meincke L."/>
            <person name="Brettin T."/>
            <person name="Detter J.C."/>
            <person name="Han C."/>
            <person name="Tapia R."/>
            <person name="Kuske C.R."/>
            <person name="Schmutz J."/>
            <person name="Larimer F."/>
            <person name="Land M."/>
            <person name="Hauser L."/>
            <person name="Kyrpides N."/>
            <person name="Mikhailova N."/>
            <person name="Sung Y."/>
            <person name="Fletcher K.E."/>
            <person name="Ritalahti K.M."/>
            <person name="Loeffler F.E."/>
            <person name="Richardson P."/>
        </authorList>
    </citation>
    <scope>NUCLEOTIDE SEQUENCE [LARGE SCALE GENOMIC DNA]</scope>
    <source>
        <strain>ATCC BAA-1151 / DSM 17278 / SZ</strain>
    </source>
</reference>
<protein>
    <recommendedName>
        <fullName evidence="1">Elongation factor Ts</fullName>
        <shortName evidence="1">EF-Ts</shortName>
    </recommendedName>
</protein>
<sequence length="311" mass="33192">MAITAAQINELRKATGAGMLDCKKALEEVDGDMEQAVDYLRKKGLAAASKKAGRAATEGMVAAAVTANGNAGVLVEINSETDFVAKNDKFQDFVKQVADHVLQKNPANIEELMAQPFAGDASKTVQTLLNEAIAVIGENMQIRRFVSFSADGGAVGSYIHAGGKIGVLVEATCDKADVCSSEAFATVLKDVAMHTAAASPQFLCREDVSADVLEREKEIYRAKARETGKPDNIIEKIIGGQVNKFYGDICLLEQVYVKDTDKTVQQYIDASAKQLGCSITLKRFAKFVLGEGLEKKESDFAAEVAAAAGLK</sequence>
<feature type="chain" id="PRO_1000116742" description="Elongation factor Ts">
    <location>
        <begin position="1"/>
        <end position="311"/>
    </location>
</feature>
<feature type="region of interest" description="Involved in Mg(2+) ion dislocation from EF-Tu" evidence="1">
    <location>
        <begin position="81"/>
        <end position="84"/>
    </location>
</feature>
<gene>
    <name evidence="1" type="primary">tsf</name>
    <name type="ordered locus">Glov_2709</name>
</gene>
<organism>
    <name type="scientific">Trichlorobacter lovleyi (strain ATCC BAA-1151 / DSM 17278 / SZ)</name>
    <name type="common">Geobacter lovleyi</name>
    <dbReference type="NCBI Taxonomy" id="398767"/>
    <lineage>
        <taxon>Bacteria</taxon>
        <taxon>Pseudomonadati</taxon>
        <taxon>Thermodesulfobacteriota</taxon>
        <taxon>Desulfuromonadia</taxon>
        <taxon>Geobacterales</taxon>
        <taxon>Geobacteraceae</taxon>
        <taxon>Trichlorobacter</taxon>
    </lineage>
</organism>
<comment type="function">
    <text evidence="1">Associates with the EF-Tu.GDP complex and induces the exchange of GDP to GTP. It remains bound to the aminoacyl-tRNA.EF-Tu.GTP complex up to the GTP hydrolysis stage on the ribosome.</text>
</comment>
<comment type="subcellular location">
    <subcellularLocation>
        <location evidence="1">Cytoplasm</location>
    </subcellularLocation>
</comment>
<comment type="similarity">
    <text evidence="1">Belongs to the EF-Ts family.</text>
</comment>